<organism>
    <name type="scientific">Escherichia coli (strain K12)</name>
    <dbReference type="NCBI Taxonomy" id="83333"/>
    <lineage>
        <taxon>Bacteria</taxon>
        <taxon>Pseudomonadati</taxon>
        <taxon>Pseudomonadota</taxon>
        <taxon>Gammaproteobacteria</taxon>
        <taxon>Enterobacterales</taxon>
        <taxon>Enterobacteriaceae</taxon>
        <taxon>Escherichia</taxon>
    </lineage>
</organism>
<reference key="1">
    <citation type="journal article" date="1985" name="J. Biochem.">
        <title>Branched-chain amino acid aminotransferase of Escherichia coli: nucleotide sequence of the ilvE gene and the deduced amino acid sequence.</title>
        <authorList>
            <person name="Kuramitsu S."/>
            <person name="Ogawa T."/>
            <person name="Ogawa H."/>
            <person name="Kagamiyama H."/>
        </authorList>
    </citation>
    <scope>NUCLEOTIDE SEQUENCE [GENOMIC DNA]</scope>
    <source>
        <strain>K12</strain>
    </source>
</reference>
<reference key="2">
    <citation type="journal article" date="1987" name="Nucleic Acids Res.">
        <title>The complete nucleotide sequence of the ilvGMEDA operon of Escherichia coli K-12.</title>
        <authorList>
            <person name="Lawther R.P."/>
            <person name="Wek R.C."/>
            <person name="Lopes J.M."/>
            <person name="Pereira R."/>
            <person name="Taillon B.E."/>
            <person name="Hatfield G.W."/>
        </authorList>
    </citation>
    <scope>NUCLEOTIDE SEQUENCE [GENOMIC DNA]</scope>
    <scope>PARTIAL PROTEIN SEQUENCE</scope>
    <source>
        <strain>K12</strain>
    </source>
</reference>
<reference key="3">
    <citation type="journal article" date="1992" name="J. Mol. Biol.">
        <title>DNA topology-mediated regulation of transcription initiation from the tandem promoters of the ilvGMEDA operon of Escherichia coli.</title>
        <authorList>
            <person name="Pagel J.M."/>
            <person name="Winkelman J.W."/>
            <person name="Adams C.W."/>
            <person name="Hatfield G.W."/>
        </authorList>
    </citation>
    <scope>NUCLEOTIDE SEQUENCE [GENOMIC DNA]</scope>
    <source>
        <strain>K12</strain>
    </source>
</reference>
<reference key="4">
    <citation type="journal article" date="1992" name="Science">
        <title>Analysis of the Escherichia coli genome: DNA sequence of the region from 84.5 to 86.5 minutes.</title>
        <authorList>
            <person name="Daniels D.L."/>
            <person name="Plunkett G. III"/>
            <person name="Burland V.D."/>
            <person name="Blattner F.R."/>
        </authorList>
    </citation>
    <scope>NUCLEOTIDE SEQUENCE [LARGE SCALE GENOMIC DNA]</scope>
    <source>
        <strain>K12 / MG1655 / ATCC 47076</strain>
    </source>
</reference>
<reference key="5">
    <citation type="journal article" date="1997" name="Science">
        <title>The complete genome sequence of Escherichia coli K-12.</title>
        <authorList>
            <person name="Blattner F.R."/>
            <person name="Plunkett G. III"/>
            <person name="Bloch C.A."/>
            <person name="Perna N.T."/>
            <person name="Burland V."/>
            <person name="Riley M."/>
            <person name="Collado-Vides J."/>
            <person name="Glasner J.D."/>
            <person name="Rode C.K."/>
            <person name="Mayhew G.F."/>
            <person name="Gregor J."/>
            <person name="Davis N.W."/>
            <person name="Kirkpatrick H.A."/>
            <person name="Goeden M.A."/>
            <person name="Rose D.J."/>
            <person name="Mau B."/>
            <person name="Shao Y."/>
        </authorList>
    </citation>
    <scope>NUCLEOTIDE SEQUENCE [LARGE SCALE GENOMIC DNA]</scope>
    <source>
        <strain>K12 / MG1655 / ATCC 47076</strain>
    </source>
</reference>
<reference key="6">
    <citation type="journal article" date="2006" name="Mol. Syst. Biol.">
        <title>Highly accurate genome sequences of Escherichia coli K-12 strains MG1655 and W3110.</title>
        <authorList>
            <person name="Hayashi K."/>
            <person name="Morooka N."/>
            <person name="Yamamoto Y."/>
            <person name="Fujita K."/>
            <person name="Isono K."/>
            <person name="Choi S."/>
            <person name="Ohtsubo E."/>
            <person name="Baba T."/>
            <person name="Wanner B.L."/>
            <person name="Mori H."/>
            <person name="Horiuchi T."/>
        </authorList>
    </citation>
    <scope>NUCLEOTIDE SEQUENCE [LARGE SCALE GENOMIC DNA]</scope>
    <source>
        <strain>K12 / W3110 / ATCC 27325 / DSM 5911</strain>
    </source>
</reference>
<dbReference type="EC" id="2.2.1.6"/>
<dbReference type="EMBL" id="X02413">
    <property type="protein sequence ID" value="CAA26261.1"/>
    <property type="status" value="ALT_INIT"/>
    <property type="molecule type" value="Genomic_DNA"/>
</dbReference>
<dbReference type="EMBL" id="M10313">
    <property type="protein sequence ID" value="AAB59051.1"/>
    <property type="status" value="ALT_INIT"/>
    <property type="molecule type" value="Genomic_DNA"/>
</dbReference>
<dbReference type="EMBL" id="X04890">
    <property type="protein sequence ID" value="CAA28574.1"/>
    <property type="molecule type" value="Genomic_DNA"/>
</dbReference>
<dbReference type="EMBL" id="M87049">
    <property type="protein sequence ID" value="AAA67572.1"/>
    <property type="molecule type" value="Genomic_DNA"/>
</dbReference>
<dbReference type="EMBL" id="U00096">
    <property type="protein sequence ID" value="AAC77489.1"/>
    <property type="molecule type" value="Genomic_DNA"/>
</dbReference>
<dbReference type="EMBL" id="AP009048">
    <property type="protein sequence ID" value="BAE77528.1"/>
    <property type="molecule type" value="Genomic_DNA"/>
</dbReference>
<dbReference type="RefSeq" id="NP_418217.1">
    <property type="nucleotide sequence ID" value="NC_000913.3"/>
</dbReference>
<dbReference type="RefSeq" id="WP_000983255.1">
    <property type="nucleotide sequence ID" value="NZ_STEB01000021.1"/>
</dbReference>
<dbReference type="SMR" id="P0ADG1"/>
<dbReference type="BioGRID" id="4263292">
    <property type="interactions" value="9"/>
</dbReference>
<dbReference type="BioGRID" id="852581">
    <property type="interactions" value="1"/>
</dbReference>
<dbReference type="ComplexPortal" id="CPX-3570">
    <property type="entry name" value="Acetolactate synthase II complex"/>
</dbReference>
<dbReference type="FunCoup" id="P0ADG1">
    <property type="interactions" value="238"/>
</dbReference>
<dbReference type="IntAct" id="P0ADG1">
    <property type="interactions" value="4"/>
</dbReference>
<dbReference type="STRING" id="511145.b3769"/>
<dbReference type="PaxDb" id="511145-b3769"/>
<dbReference type="EnsemblBacteria" id="AAC77489">
    <property type="protein sequence ID" value="AAC77489"/>
    <property type="gene ID" value="b3769"/>
</dbReference>
<dbReference type="GeneID" id="93778176"/>
<dbReference type="GeneID" id="948279"/>
<dbReference type="KEGG" id="ecj:JW3742"/>
<dbReference type="KEGG" id="eco:b3769"/>
<dbReference type="KEGG" id="ecoc:C3026_20415"/>
<dbReference type="PATRIC" id="fig|1411691.4.peg.2937"/>
<dbReference type="EchoBASE" id="EB0496"/>
<dbReference type="eggNOG" id="COG3978">
    <property type="taxonomic scope" value="Bacteria"/>
</dbReference>
<dbReference type="HOGENOM" id="CLU_183627_0_0_6"/>
<dbReference type="InParanoid" id="P0ADG1"/>
<dbReference type="OMA" id="RGFQICS"/>
<dbReference type="OrthoDB" id="6198158at2"/>
<dbReference type="PhylomeDB" id="P0ADG1"/>
<dbReference type="BioCyc" id="EcoCyc:SMALLILVM-MONOMER"/>
<dbReference type="BRENDA" id="2.2.1.6">
    <property type="organism ID" value="2026"/>
</dbReference>
<dbReference type="SABIO-RK" id="P0ADG1"/>
<dbReference type="UniPathway" id="UPA00047">
    <property type="reaction ID" value="UER00055"/>
</dbReference>
<dbReference type="UniPathway" id="UPA00049">
    <property type="reaction ID" value="UER00059"/>
</dbReference>
<dbReference type="PRO" id="PR:P0ADG1"/>
<dbReference type="Proteomes" id="UP000000625">
    <property type="component" value="Chromosome"/>
</dbReference>
<dbReference type="GO" id="GO:0005948">
    <property type="term" value="C:acetolactate synthase complex"/>
    <property type="evidence" value="ECO:0000353"/>
    <property type="project" value="ComplexPortal"/>
</dbReference>
<dbReference type="GO" id="GO:0003984">
    <property type="term" value="F:acetolactate synthase activity"/>
    <property type="evidence" value="ECO:0000314"/>
    <property type="project" value="EcoCyc"/>
</dbReference>
<dbReference type="GO" id="GO:0008652">
    <property type="term" value="P:amino acid biosynthetic process"/>
    <property type="evidence" value="ECO:0000314"/>
    <property type="project" value="EcoCyc"/>
</dbReference>
<dbReference type="GO" id="GO:0009082">
    <property type="term" value="P:branched-chain amino acid biosynthetic process"/>
    <property type="evidence" value="ECO:0000314"/>
    <property type="project" value="ComplexPortal"/>
</dbReference>
<dbReference type="GO" id="GO:0009097">
    <property type="term" value="P:isoleucine biosynthetic process"/>
    <property type="evidence" value="ECO:0007669"/>
    <property type="project" value="UniProtKB-UniPathway"/>
</dbReference>
<dbReference type="GO" id="GO:0009099">
    <property type="term" value="P:L-valine biosynthetic process"/>
    <property type="evidence" value="ECO:0007669"/>
    <property type="project" value="UniProtKB-UniPathway"/>
</dbReference>
<dbReference type="FunFam" id="3.30.70.260:FF:000009">
    <property type="entry name" value="Acetolactate synthase isozyme 2 small subunit"/>
    <property type="match status" value="1"/>
</dbReference>
<dbReference type="Gene3D" id="3.30.70.260">
    <property type="match status" value="1"/>
</dbReference>
<dbReference type="InterPro" id="IPR045865">
    <property type="entry name" value="ACT-like_dom_sf"/>
</dbReference>
<dbReference type="InterPro" id="IPR002912">
    <property type="entry name" value="ACT_dom"/>
</dbReference>
<dbReference type="NCBIfam" id="NF008362">
    <property type="entry name" value="PRK11152.1"/>
    <property type="match status" value="1"/>
</dbReference>
<dbReference type="Pfam" id="PF13710">
    <property type="entry name" value="ACT_5"/>
    <property type="match status" value="1"/>
</dbReference>
<dbReference type="SUPFAM" id="SSF55021">
    <property type="entry name" value="ACT-like"/>
    <property type="match status" value="1"/>
</dbReference>
<dbReference type="PROSITE" id="PS51671">
    <property type="entry name" value="ACT"/>
    <property type="match status" value="1"/>
</dbReference>
<comment type="catalytic activity">
    <reaction>
        <text>2 pyruvate + H(+) = (2S)-2-acetolactate + CO2</text>
        <dbReference type="Rhea" id="RHEA:25249"/>
        <dbReference type="ChEBI" id="CHEBI:15361"/>
        <dbReference type="ChEBI" id="CHEBI:15378"/>
        <dbReference type="ChEBI" id="CHEBI:16526"/>
        <dbReference type="ChEBI" id="CHEBI:58476"/>
        <dbReference type="EC" id="2.2.1.6"/>
    </reaction>
</comment>
<comment type="cofactor">
    <cofactor evidence="1">
        <name>Mg(2+)</name>
        <dbReference type="ChEBI" id="CHEBI:18420"/>
    </cofactor>
    <text evidence="1">Binds 1 Mg(2+) ion per subunit.</text>
</comment>
<comment type="cofactor">
    <cofactor evidence="1">
        <name>thiamine diphosphate</name>
        <dbReference type="ChEBI" id="CHEBI:58937"/>
    </cofactor>
    <text evidence="1">Binds 1 thiamine pyrophosphate per subunit.</text>
</comment>
<comment type="pathway">
    <text>Amino-acid biosynthesis; L-isoleucine biosynthesis; L-isoleucine from 2-oxobutanoate: step 1/4.</text>
</comment>
<comment type="pathway">
    <text>Amino-acid biosynthesis; L-valine biosynthesis; L-valine from pyruvate: step 1/4.</text>
</comment>
<comment type="subunit">
    <text>Tetramer of two large and two small chains.</text>
</comment>
<comment type="interaction">
    <interactant intactId="EBI-1133722">
        <id>P0ADG1</id>
    </interactant>
    <interactant intactId="EBI-1133701">
        <id>P0DP90</id>
        <label>ilvG</label>
    </interactant>
    <organismsDiffer>false</organismsDiffer>
    <experiments>2</experiments>
</comment>
<comment type="miscellaneous">
    <text>E.coli contains genes for 3 AHAS isozymes: ilvBN, ilvGM and ilvIH.</text>
</comment>
<comment type="sequence caution" evidence="3">
    <conflict type="erroneous initiation">
        <sequence resource="EMBL-CDS" id="AAB59051"/>
    </conflict>
</comment>
<comment type="sequence caution" evidence="3">
    <conflict type="erroneous initiation">
        <sequence resource="EMBL-CDS" id="CAA26261"/>
    </conflict>
</comment>
<protein>
    <recommendedName>
        <fullName>Acetolactate synthase isozyme 2 small subunit</fullName>
        <ecNumber>2.2.1.6</ecNumber>
    </recommendedName>
    <alternativeName>
        <fullName>ALS-II</fullName>
    </alternativeName>
    <alternativeName>
        <fullName>Acetohydroxy-acid synthase II small subunit</fullName>
        <shortName>AHAS-II</shortName>
    </alternativeName>
</protein>
<proteinExistence type="evidence at protein level"/>
<gene>
    <name type="primary">ilvM</name>
    <name type="ordered locus">b3769</name>
    <name type="ordered locus">JW3742</name>
</gene>
<name>ILVM_ECOLI</name>
<sequence>MMQHQVNVSARFNPETLERVLRVVRHRGFHVCSMNMAAASDAQNINIELTVASPRSVDLLFSQLNKLVDVAHVAICQSTTTSQQIRA</sequence>
<accession>P0ADG1</accession>
<accession>P13048</accession>
<accession>P78269</accession>
<accession>Q2M878</accession>
<feature type="chain" id="PRO_0000151429" description="Acetolactate synthase isozyme 2 small subunit">
    <location>
        <begin position="1"/>
        <end position="87"/>
    </location>
</feature>
<feature type="domain" description="ACT" evidence="2">
    <location>
        <begin position="5"/>
        <end position="78"/>
    </location>
</feature>
<keyword id="KW-0028">Amino-acid biosynthesis</keyword>
<keyword id="KW-0100">Branched-chain amino acid biosynthesis</keyword>
<keyword id="KW-0903">Direct protein sequencing</keyword>
<keyword id="KW-0460">Magnesium</keyword>
<keyword id="KW-1185">Reference proteome</keyword>
<keyword id="KW-0786">Thiamine pyrophosphate</keyword>
<keyword id="KW-0808">Transferase</keyword>
<evidence type="ECO:0000250" key="1"/>
<evidence type="ECO:0000255" key="2">
    <source>
        <dbReference type="PROSITE-ProRule" id="PRU01007"/>
    </source>
</evidence>
<evidence type="ECO:0000305" key="3"/>